<sequence>MKTCLVFAFFLVAVFAAVQAEENDSPQTLPRRLTVRAAQSFGRCNQKQCDADCVKKGYFGGLCTLTSCFCTGSRS</sequence>
<organism>
    <name type="scientific">Lonomia obliqua</name>
    <name type="common">Moth</name>
    <dbReference type="NCBI Taxonomy" id="304329"/>
    <lineage>
        <taxon>Eukaryota</taxon>
        <taxon>Metazoa</taxon>
        <taxon>Ecdysozoa</taxon>
        <taxon>Arthropoda</taxon>
        <taxon>Hexapoda</taxon>
        <taxon>Insecta</taxon>
        <taxon>Pterygota</taxon>
        <taxon>Neoptera</taxon>
        <taxon>Endopterygota</taxon>
        <taxon>Lepidoptera</taxon>
        <taxon>Glossata</taxon>
        <taxon>Ditrysia</taxon>
        <taxon>Bombycoidea</taxon>
        <taxon>Saturniidae</taxon>
        <taxon>Hemileucinae</taxon>
        <taxon>Lonomia</taxon>
    </lineage>
</organism>
<proteinExistence type="inferred from homology"/>
<protein>
    <recommendedName>
        <fullName>Defense protein 6</fullName>
        <shortName>DFP-6</shortName>
    </recommendedName>
</protein>
<accession>Q5MGC9</accession>
<reference key="1">
    <citation type="journal article" date="2005" name="Gene">
        <title>A catalog for the transcripts from the venomous structures of the caterpillar Lonomia obliqua: identification of the proteins potentially involved in the coagulation disorder and hemorrhagic syndrome.</title>
        <authorList>
            <person name="Veiga A.B.G."/>
            <person name="Ribeiro J.M.C."/>
            <person name="Guimaraes J.A."/>
            <person name="Francischetti I.M.B."/>
        </authorList>
    </citation>
    <scope>NUCLEOTIDE SEQUENCE [LARGE SCALE MRNA]</scope>
    <source>
        <tissue>Spicule</tissue>
    </source>
</reference>
<evidence type="ECO:0000250" key="1"/>
<evidence type="ECO:0000255" key="2"/>
<evidence type="ECO:0000305" key="3"/>
<feature type="signal peptide" evidence="2">
    <location>
        <begin position="1"/>
        <end position="20"/>
    </location>
</feature>
<feature type="propeptide" id="PRO_0000372779" evidence="1">
    <location>
        <begin position="21"/>
        <end position="32"/>
    </location>
</feature>
<feature type="chain" id="PRO_0000372780" description="Defense protein 6">
    <location>
        <begin position="33"/>
        <end position="75"/>
    </location>
</feature>
<feature type="disulfide bond" evidence="2">
    <location>
        <begin position="44"/>
        <end position="63"/>
    </location>
</feature>
<feature type="disulfide bond" evidence="1">
    <location>
        <begin position="49"/>
        <end position="68"/>
    </location>
</feature>
<feature type="disulfide bond" evidence="1">
    <location>
        <begin position="53"/>
        <end position="70"/>
    </location>
</feature>
<comment type="function">
    <text evidence="1">Has antibacterial activity.</text>
</comment>
<comment type="subcellular location">
    <subcellularLocation>
        <location evidence="1">Secreted</location>
    </subcellularLocation>
</comment>
<comment type="similarity">
    <text evidence="3">Belongs to the invertebrate defensin family.</text>
</comment>
<dbReference type="EMBL" id="AY829857">
    <property type="protein sequence ID" value="AAV91471.1"/>
    <property type="molecule type" value="mRNA"/>
</dbReference>
<dbReference type="GO" id="GO:0005576">
    <property type="term" value="C:extracellular region"/>
    <property type="evidence" value="ECO:0007669"/>
    <property type="project" value="UniProtKB-SubCell"/>
</dbReference>
<dbReference type="GO" id="GO:0042742">
    <property type="term" value="P:defense response to bacterium"/>
    <property type="evidence" value="ECO:0007669"/>
    <property type="project" value="UniProtKB-KW"/>
</dbReference>
<dbReference type="GO" id="GO:0045087">
    <property type="term" value="P:innate immune response"/>
    <property type="evidence" value="ECO:0007669"/>
    <property type="project" value="UniProtKB-KW"/>
</dbReference>
<keyword id="KW-0044">Antibiotic</keyword>
<keyword id="KW-0929">Antimicrobial</keyword>
<keyword id="KW-0165">Cleavage on pair of basic residues</keyword>
<keyword id="KW-0211">Defensin</keyword>
<keyword id="KW-1015">Disulfide bond</keyword>
<keyword id="KW-0391">Immunity</keyword>
<keyword id="KW-0399">Innate immunity</keyword>
<keyword id="KW-0964">Secreted</keyword>
<keyword id="KW-0732">Signal</keyword>
<name>DFP6_LONON</name>